<organism>
    <name type="scientific">Clostridium novyi (strain NT)</name>
    <dbReference type="NCBI Taxonomy" id="386415"/>
    <lineage>
        <taxon>Bacteria</taxon>
        <taxon>Bacillati</taxon>
        <taxon>Bacillota</taxon>
        <taxon>Clostridia</taxon>
        <taxon>Eubacteriales</taxon>
        <taxon>Clostridiaceae</taxon>
        <taxon>Clostridium</taxon>
    </lineage>
</organism>
<gene>
    <name evidence="1" type="primary">hcp</name>
    <name type="ordered locus">NT01CX_0591</name>
</gene>
<evidence type="ECO:0000255" key="1">
    <source>
        <dbReference type="HAMAP-Rule" id="MF_00069"/>
    </source>
</evidence>
<accession>A0Q355</accession>
<comment type="function">
    <text evidence="1">Catalyzes the reduction of hydroxylamine to form NH(3) and H(2)O.</text>
</comment>
<comment type="catalytic activity">
    <reaction evidence="1">
        <text>A + NH4(+) + H2O = hydroxylamine + AH2 + H(+)</text>
        <dbReference type="Rhea" id="RHEA:22052"/>
        <dbReference type="ChEBI" id="CHEBI:13193"/>
        <dbReference type="ChEBI" id="CHEBI:15377"/>
        <dbReference type="ChEBI" id="CHEBI:15378"/>
        <dbReference type="ChEBI" id="CHEBI:15429"/>
        <dbReference type="ChEBI" id="CHEBI:17499"/>
        <dbReference type="ChEBI" id="CHEBI:28938"/>
        <dbReference type="EC" id="1.7.99.1"/>
    </reaction>
</comment>
<comment type="cofactor">
    <cofactor evidence="1">
        <name>[4Fe-4S] cluster</name>
        <dbReference type="ChEBI" id="CHEBI:49883"/>
    </cofactor>
    <text evidence="1">Binds 1 [4Fe-4S] cluster.</text>
</comment>
<comment type="cofactor">
    <cofactor evidence="1">
        <name>hybrid [4Fe-2O-2S] cluster</name>
        <dbReference type="ChEBI" id="CHEBI:60519"/>
    </cofactor>
    <text evidence="1">Binds 1 hybrid [4Fe-2O-2S] cluster.</text>
</comment>
<comment type="subcellular location">
    <subcellularLocation>
        <location evidence="1">Cytoplasm</location>
    </subcellularLocation>
</comment>
<comment type="similarity">
    <text evidence="1">Belongs to the HCP family.</text>
</comment>
<sequence length="549" mass="60696">MSMFCYQCQETAGCKGCTSRGVCGKTSDVANLQDLLIYVVKGISIYDLKAEEAGIKNNEVNKFIMDALFSTITNANFSREDFIARIKDAIGLRDSIKDELVKNNVQIDDIKDDCALWKGISVEEFEAKAATVGILATENEDVRSLRELLTYGIKGMAAYAHHAYNLGYENEEIYTFMKKALVSTRNALSVDEMIGIVLECGKFGVDVMALLDKANTETYGNPEITKVNIGVRNNPAILISGHDLKDMEELLKQTEGTGVDVYTHSEMLAANYYPEFKKYDHFVGNYGNAWWKQNEEFKSFNGPILMTTNCLVPPKESYKDRVYTTGAVAFEGLKHIEDRKDGKAKDFSEIIEHAKRCASPMEIEKGEIVGGFAHNAVLSLADKIVDAVKTGAIRRFFVMAGCDGRAKSRNYYSDFAKALPKDTVILTAGCAKYKYNKLDLGDIGGIPRVLDAGQCNDSYSLAVIALKLKEVFELQDINELPISFNISWYEQKAVIVLLALLHLGVKNIHLGPTLPAFLSPNVAKVLVENFGIAGIGTVEDDIKLFLGEA</sequence>
<dbReference type="EC" id="1.7.99.1" evidence="1"/>
<dbReference type="EMBL" id="CP000382">
    <property type="protein sequence ID" value="ABK61354.1"/>
    <property type="molecule type" value="Genomic_DNA"/>
</dbReference>
<dbReference type="RefSeq" id="WP_011723036.1">
    <property type="nucleotide sequence ID" value="NC_008593.1"/>
</dbReference>
<dbReference type="SMR" id="A0Q355"/>
<dbReference type="STRING" id="386415.NT01CX_0591"/>
<dbReference type="KEGG" id="cno:NT01CX_0591"/>
<dbReference type="PATRIC" id="fig|386415.7.peg.2095"/>
<dbReference type="eggNOG" id="COG1151">
    <property type="taxonomic scope" value="Bacteria"/>
</dbReference>
<dbReference type="HOGENOM" id="CLU_038344_2_0_9"/>
<dbReference type="Proteomes" id="UP000008220">
    <property type="component" value="Chromosome"/>
</dbReference>
<dbReference type="GO" id="GO:0005737">
    <property type="term" value="C:cytoplasm"/>
    <property type="evidence" value="ECO:0007669"/>
    <property type="project" value="UniProtKB-SubCell"/>
</dbReference>
<dbReference type="GO" id="GO:0051539">
    <property type="term" value="F:4 iron, 4 sulfur cluster binding"/>
    <property type="evidence" value="ECO:0007669"/>
    <property type="project" value="UniProtKB-KW"/>
</dbReference>
<dbReference type="GO" id="GO:0050418">
    <property type="term" value="F:hydroxylamine reductase activity"/>
    <property type="evidence" value="ECO:0007669"/>
    <property type="project" value="UniProtKB-UniRule"/>
</dbReference>
<dbReference type="GO" id="GO:0046872">
    <property type="term" value="F:metal ion binding"/>
    <property type="evidence" value="ECO:0007669"/>
    <property type="project" value="UniProtKB-KW"/>
</dbReference>
<dbReference type="GO" id="GO:0004601">
    <property type="term" value="F:peroxidase activity"/>
    <property type="evidence" value="ECO:0007669"/>
    <property type="project" value="TreeGrafter"/>
</dbReference>
<dbReference type="GO" id="GO:0042542">
    <property type="term" value="P:response to hydrogen peroxide"/>
    <property type="evidence" value="ECO:0007669"/>
    <property type="project" value="TreeGrafter"/>
</dbReference>
<dbReference type="CDD" id="cd01914">
    <property type="entry name" value="HCP"/>
    <property type="match status" value="1"/>
</dbReference>
<dbReference type="FunFam" id="1.20.1270.20:FF:000001">
    <property type="entry name" value="Hydroxylamine reductase"/>
    <property type="match status" value="1"/>
</dbReference>
<dbReference type="FunFam" id="3.40.50.2030:FF:000001">
    <property type="entry name" value="Hydroxylamine reductase"/>
    <property type="match status" value="1"/>
</dbReference>
<dbReference type="FunFam" id="3.40.50.2030:FF:000002">
    <property type="entry name" value="Hydroxylamine reductase"/>
    <property type="match status" value="1"/>
</dbReference>
<dbReference type="Gene3D" id="1.20.1270.20">
    <property type="match status" value="2"/>
</dbReference>
<dbReference type="Gene3D" id="3.40.50.2030">
    <property type="match status" value="2"/>
</dbReference>
<dbReference type="HAMAP" id="MF_00069">
    <property type="entry name" value="Hydroxylam_reduct"/>
    <property type="match status" value="1"/>
</dbReference>
<dbReference type="InterPro" id="IPR004137">
    <property type="entry name" value="HCP/CODH"/>
</dbReference>
<dbReference type="InterPro" id="IPR010048">
    <property type="entry name" value="Hydroxylam_reduct"/>
</dbReference>
<dbReference type="InterPro" id="IPR016099">
    <property type="entry name" value="Prismane-like_a/b-sand"/>
</dbReference>
<dbReference type="InterPro" id="IPR011254">
    <property type="entry name" value="Prismane-like_sf"/>
</dbReference>
<dbReference type="InterPro" id="IPR016100">
    <property type="entry name" value="Prismane_a-bundle"/>
</dbReference>
<dbReference type="NCBIfam" id="TIGR01703">
    <property type="entry name" value="hybrid_clust"/>
    <property type="match status" value="1"/>
</dbReference>
<dbReference type="NCBIfam" id="NF003658">
    <property type="entry name" value="PRK05290.1"/>
    <property type="match status" value="1"/>
</dbReference>
<dbReference type="PANTHER" id="PTHR30109">
    <property type="entry name" value="HYDROXYLAMINE REDUCTASE"/>
    <property type="match status" value="1"/>
</dbReference>
<dbReference type="PANTHER" id="PTHR30109:SF0">
    <property type="entry name" value="HYDROXYLAMINE REDUCTASE"/>
    <property type="match status" value="1"/>
</dbReference>
<dbReference type="Pfam" id="PF03063">
    <property type="entry name" value="Prismane"/>
    <property type="match status" value="1"/>
</dbReference>
<dbReference type="PIRSF" id="PIRSF000076">
    <property type="entry name" value="HCP"/>
    <property type="match status" value="1"/>
</dbReference>
<dbReference type="SUPFAM" id="SSF56821">
    <property type="entry name" value="Prismane protein-like"/>
    <property type="match status" value="1"/>
</dbReference>
<reference key="1">
    <citation type="journal article" date="2006" name="Nat. Biotechnol.">
        <title>The genome and transcriptomes of the anti-tumor agent Clostridium novyi-NT.</title>
        <authorList>
            <person name="Bettegowda C."/>
            <person name="Huang X."/>
            <person name="Lin J."/>
            <person name="Cheong I."/>
            <person name="Kohli M."/>
            <person name="Szabo S.A."/>
            <person name="Zhang X."/>
            <person name="Diaz L.A. Jr."/>
            <person name="Velculescu V.E."/>
            <person name="Parmigiani G."/>
            <person name="Kinzler K.W."/>
            <person name="Vogelstein B."/>
            <person name="Zhou S."/>
        </authorList>
    </citation>
    <scope>NUCLEOTIDE SEQUENCE [LARGE SCALE GENOMIC DNA]</scope>
    <source>
        <strain>NT</strain>
    </source>
</reference>
<feature type="chain" id="PRO_1000009150" description="Hydroxylamine reductase">
    <location>
        <begin position="1"/>
        <end position="549"/>
    </location>
</feature>
<feature type="binding site" evidence="1">
    <location>
        <position position="5"/>
    </location>
    <ligand>
        <name>[4Fe-4S] cluster</name>
        <dbReference type="ChEBI" id="CHEBI:49883"/>
    </ligand>
</feature>
<feature type="binding site" evidence="1">
    <location>
        <position position="8"/>
    </location>
    <ligand>
        <name>[4Fe-4S] cluster</name>
        <dbReference type="ChEBI" id="CHEBI:49883"/>
    </ligand>
</feature>
<feature type="binding site" evidence="1">
    <location>
        <position position="17"/>
    </location>
    <ligand>
        <name>[4Fe-4S] cluster</name>
        <dbReference type="ChEBI" id="CHEBI:49883"/>
    </ligand>
</feature>
<feature type="binding site" evidence="1">
    <location>
        <position position="23"/>
    </location>
    <ligand>
        <name>[4Fe-4S] cluster</name>
        <dbReference type="ChEBI" id="CHEBI:49883"/>
    </ligand>
</feature>
<feature type="binding site" evidence="1">
    <location>
        <position position="242"/>
    </location>
    <ligand>
        <name>hybrid [4Fe-2O-2S] cluster</name>
        <dbReference type="ChEBI" id="CHEBI:60519"/>
    </ligand>
</feature>
<feature type="binding site" evidence="1">
    <location>
        <position position="266"/>
    </location>
    <ligand>
        <name>hybrid [4Fe-2O-2S] cluster</name>
        <dbReference type="ChEBI" id="CHEBI:60519"/>
    </ligand>
</feature>
<feature type="binding site" evidence="1">
    <location>
        <position position="310"/>
    </location>
    <ligand>
        <name>hybrid [4Fe-2O-2S] cluster</name>
        <dbReference type="ChEBI" id="CHEBI:60519"/>
    </ligand>
</feature>
<feature type="binding site" description="via persulfide group" evidence="1">
    <location>
        <position position="402"/>
    </location>
    <ligand>
        <name>hybrid [4Fe-2O-2S] cluster</name>
        <dbReference type="ChEBI" id="CHEBI:60519"/>
    </ligand>
</feature>
<feature type="binding site" evidence="1">
    <location>
        <position position="430"/>
    </location>
    <ligand>
        <name>hybrid [4Fe-2O-2S] cluster</name>
        <dbReference type="ChEBI" id="CHEBI:60519"/>
    </ligand>
</feature>
<feature type="binding site" evidence="1">
    <location>
        <position position="455"/>
    </location>
    <ligand>
        <name>hybrid [4Fe-2O-2S] cluster</name>
        <dbReference type="ChEBI" id="CHEBI:60519"/>
    </ligand>
</feature>
<feature type="binding site" evidence="1">
    <location>
        <position position="490"/>
    </location>
    <ligand>
        <name>hybrid [4Fe-2O-2S] cluster</name>
        <dbReference type="ChEBI" id="CHEBI:60519"/>
    </ligand>
</feature>
<feature type="binding site" evidence="1">
    <location>
        <position position="492"/>
    </location>
    <ligand>
        <name>hybrid [4Fe-2O-2S] cluster</name>
        <dbReference type="ChEBI" id="CHEBI:60519"/>
    </ligand>
</feature>
<feature type="modified residue" description="Cysteine persulfide" evidence="1">
    <location>
        <position position="402"/>
    </location>
</feature>
<protein>
    <recommendedName>
        <fullName evidence="1">Hydroxylamine reductase</fullName>
        <ecNumber evidence="1">1.7.99.1</ecNumber>
    </recommendedName>
    <alternativeName>
        <fullName evidence="1">Hybrid-cluster protein</fullName>
        <shortName evidence="1">HCP</shortName>
    </alternativeName>
    <alternativeName>
        <fullName evidence="1">Prismane protein</fullName>
    </alternativeName>
</protein>
<proteinExistence type="inferred from homology"/>
<name>HCP_CLONN</name>
<keyword id="KW-0004">4Fe-4S</keyword>
<keyword id="KW-0963">Cytoplasm</keyword>
<keyword id="KW-0408">Iron</keyword>
<keyword id="KW-0411">Iron-sulfur</keyword>
<keyword id="KW-0479">Metal-binding</keyword>
<keyword id="KW-0560">Oxidoreductase</keyword>
<keyword id="KW-1185">Reference proteome</keyword>